<protein>
    <recommendedName>
        <fullName evidence="1">Large ribosomal subunit protein uL5</fullName>
    </recommendedName>
    <alternativeName>
        <fullName evidence="2">50S ribosomal protein L5</fullName>
    </alternativeName>
</protein>
<dbReference type="EMBL" id="CR767821">
    <property type="protein sequence ID" value="CAH58327.1"/>
    <property type="molecule type" value="Genomic_DNA"/>
</dbReference>
<dbReference type="EMBL" id="CR925678">
    <property type="protein sequence ID" value="CAI27120.1"/>
    <property type="molecule type" value="Genomic_DNA"/>
</dbReference>
<dbReference type="RefSeq" id="WP_011155277.1">
    <property type="nucleotide sequence ID" value="NC_005295.2"/>
</dbReference>
<dbReference type="RefSeq" id="WP_011256131.1">
    <property type="nucleotide sequence ID" value="NC_006832.1"/>
</dbReference>
<dbReference type="SMR" id="Q5HAT4"/>
<dbReference type="GeneID" id="33057510"/>
<dbReference type="KEGG" id="eru:Erum5960"/>
<dbReference type="KEGG" id="erw:ERWE_CDS_06260"/>
<dbReference type="eggNOG" id="COG0094">
    <property type="taxonomic scope" value="Bacteria"/>
</dbReference>
<dbReference type="HOGENOM" id="CLU_061015_2_1_5"/>
<dbReference type="Proteomes" id="UP000001021">
    <property type="component" value="Chromosome"/>
</dbReference>
<dbReference type="GO" id="GO:1990904">
    <property type="term" value="C:ribonucleoprotein complex"/>
    <property type="evidence" value="ECO:0007669"/>
    <property type="project" value="UniProtKB-KW"/>
</dbReference>
<dbReference type="GO" id="GO:0005840">
    <property type="term" value="C:ribosome"/>
    <property type="evidence" value="ECO:0007669"/>
    <property type="project" value="UniProtKB-KW"/>
</dbReference>
<dbReference type="GO" id="GO:0019843">
    <property type="term" value="F:rRNA binding"/>
    <property type="evidence" value="ECO:0007669"/>
    <property type="project" value="UniProtKB-UniRule"/>
</dbReference>
<dbReference type="GO" id="GO:0003735">
    <property type="term" value="F:structural constituent of ribosome"/>
    <property type="evidence" value="ECO:0007669"/>
    <property type="project" value="InterPro"/>
</dbReference>
<dbReference type="GO" id="GO:0000049">
    <property type="term" value="F:tRNA binding"/>
    <property type="evidence" value="ECO:0007669"/>
    <property type="project" value="UniProtKB-UniRule"/>
</dbReference>
<dbReference type="GO" id="GO:0006412">
    <property type="term" value="P:translation"/>
    <property type="evidence" value="ECO:0007669"/>
    <property type="project" value="UniProtKB-UniRule"/>
</dbReference>
<dbReference type="FunFam" id="3.30.1440.10:FF:000001">
    <property type="entry name" value="50S ribosomal protein L5"/>
    <property type="match status" value="1"/>
</dbReference>
<dbReference type="Gene3D" id="3.30.1440.10">
    <property type="match status" value="1"/>
</dbReference>
<dbReference type="HAMAP" id="MF_01333_B">
    <property type="entry name" value="Ribosomal_uL5_B"/>
    <property type="match status" value="1"/>
</dbReference>
<dbReference type="InterPro" id="IPR002132">
    <property type="entry name" value="Ribosomal_uL5"/>
</dbReference>
<dbReference type="InterPro" id="IPR020930">
    <property type="entry name" value="Ribosomal_uL5_bac-type"/>
</dbReference>
<dbReference type="InterPro" id="IPR031309">
    <property type="entry name" value="Ribosomal_uL5_C"/>
</dbReference>
<dbReference type="InterPro" id="IPR022803">
    <property type="entry name" value="Ribosomal_uL5_dom_sf"/>
</dbReference>
<dbReference type="InterPro" id="IPR031310">
    <property type="entry name" value="Ribosomal_uL5_N"/>
</dbReference>
<dbReference type="NCBIfam" id="NF000585">
    <property type="entry name" value="PRK00010.1"/>
    <property type="match status" value="1"/>
</dbReference>
<dbReference type="PANTHER" id="PTHR11994">
    <property type="entry name" value="60S RIBOSOMAL PROTEIN L11-RELATED"/>
    <property type="match status" value="1"/>
</dbReference>
<dbReference type="Pfam" id="PF00281">
    <property type="entry name" value="Ribosomal_L5"/>
    <property type="match status" value="1"/>
</dbReference>
<dbReference type="Pfam" id="PF00673">
    <property type="entry name" value="Ribosomal_L5_C"/>
    <property type="match status" value="1"/>
</dbReference>
<dbReference type="PIRSF" id="PIRSF002161">
    <property type="entry name" value="Ribosomal_L5"/>
    <property type="match status" value="1"/>
</dbReference>
<dbReference type="SUPFAM" id="SSF55282">
    <property type="entry name" value="RL5-like"/>
    <property type="match status" value="1"/>
</dbReference>
<accession>Q5HAT4</accession>
<accession>Q5FD70</accession>
<feature type="chain" id="PRO_0000242999" description="Large ribosomal subunit protein uL5">
    <location>
        <begin position="1"/>
        <end position="177"/>
    </location>
</feature>
<feature type="sequence conflict" description="In Ref. 2; CAI27120." evidence="2" ref="2">
    <original>L</original>
    <variation>V</variation>
    <location>
        <position position="2"/>
    </location>
</feature>
<reference key="1">
    <citation type="journal article" date="2005" name="Proc. Natl. Acad. Sci. U.S.A.">
        <title>The genome of the heartwater agent Ehrlichia ruminantium contains multiple tandem repeats of actively variable copy number.</title>
        <authorList>
            <person name="Collins N.E."/>
            <person name="Liebenberg J."/>
            <person name="de Villiers E.P."/>
            <person name="Brayton K.A."/>
            <person name="Louw E."/>
            <person name="Pretorius A."/>
            <person name="Faber F.E."/>
            <person name="van Heerden H."/>
            <person name="Josemans A."/>
            <person name="van Kleef M."/>
            <person name="Steyn H.C."/>
            <person name="van Strijp M.F."/>
            <person name="Zweygarth E."/>
            <person name="Jongejan F."/>
            <person name="Maillard J.C."/>
            <person name="Berthier D."/>
            <person name="Botha M."/>
            <person name="Joubert F."/>
            <person name="Corton C.H."/>
            <person name="Thomson N.R."/>
            <person name="Allsopp M.T."/>
            <person name="Allsopp B.A."/>
        </authorList>
    </citation>
    <scope>NUCLEOTIDE SEQUENCE [LARGE SCALE GENOMIC DNA]</scope>
    <source>
        <strain>Welgevonden</strain>
    </source>
</reference>
<reference key="2">
    <citation type="journal article" date="2006" name="J. Bacteriol.">
        <title>Comparative genomic analysis of three strains of Ehrlichia ruminantium reveals an active process of genome size plasticity.</title>
        <authorList>
            <person name="Frutos R."/>
            <person name="Viari A."/>
            <person name="Ferraz C."/>
            <person name="Morgat A."/>
            <person name="Eychenie S."/>
            <person name="Kandassamy Y."/>
            <person name="Chantal I."/>
            <person name="Bensaid A."/>
            <person name="Coissac E."/>
            <person name="Vachiery N."/>
            <person name="Demaille J."/>
            <person name="Martinez D."/>
        </authorList>
    </citation>
    <scope>NUCLEOTIDE SEQUENCE [LARGE SCALE GENOMIC DNA]</scope>
    <source>
        <strain>Welgevonden</strain>
    </source>
</reference>
<name>RL5_EHRRW</name>
<proteinExistence type="inferred from homology"/>
<organism>
    <name type="scientific">Ehrlichia ruminantium (strain Welgevonden)</name>
    <dbReference type="NCBI Taxonomy" id="254945"/>
    <lineage>
        <taxon>Bacteria</taxon>
        <taxon>Pseudomonadati</taxon>
        <taxon>Pseudomonadota</taxon>
        <taxon>Alphaproteobacteria</taxon>
        <taxon>Rickettsiales</taxon>
        <taxon>Anaplasmataceae</taxon>
        <taxon>Ehrlichia</taxon>
    </lineage>
</organism>
<sequence length="177" mass="19768">MLKDLYKTQIVPSLQNKLGYSNVMQVPKIVKVCLNMGLGIRGSDSKVMNSCVRDLALIAGQKPVATSVKKSIAGFKIRKGFPIGCKVTLRNNKMYEFLERLIYVVLPREQDFKGLSINQFDGCGNISIGIKEHISFLEVDYDKIDKILGLDINIVTNAVNNKDAKLLLMEFGLPFIN</sequence>
<evidence type="ECO:0000255" key="1">
    <source>
        <dbReference type="HAMAP-Rule" id="MF_01333"/>
    </source>
</evidence>
<evidence type="ECO:0000305" key="2"/>
<keyword id="KW-0687">Ribonucleoprotein</keyword>
<keyword id="KW-0689">Ribosomal protein</keyword>
<keyword id="KW-0694">RNA-binding</keyword>
<keyword id="KW-0699">rRNA-binding</keyword>
<keyword id="KW-0820">tRNA-binding</keyword>
<comment type="function">
    <text evidence="1">This is one of the proteins that bind and probably mediate the attachment of the 5S RNA into the large ribosomal subunit, where it forms part of the central protuberance. In the 70S ribosome it contacts protein S13 of the 30S subunit (bridge B1b), connecting the 2 subunits; this bridge is implicated in subunit movement. Contacts the P site tRNA; the 5S rRNA and some of its associated proteins might help stabilize positioning of ribosome-bound tRNAs.</text>
</comment>
<comment type="subunit">
    <text evidence="1">Part of the 50S ribosomal subunit; part of the 5S rRNA/L5/L18/L25 subcomplex. Contacts the 5S rRNA and the P site tRNA. Forms a bridge to the 30S subunit in the 70S ribosome.</text>
</comment>
<comment type="similarity">
    <text evidence="1">Belongs to the universal ribosomal protein uL5 family.</text>
</comment>
<gene>
    <name evidence="1" type="primary">rplE</name>
    <name type="ordered locus">Erum5960</name>
    <name type="ordered locus">ERWE_CDS_06260</name>
</gene>